<proteinExistence type="evidence at protein level"/>
<organism>
    <name type="scientific">Homo sapiens</name>
    <name type="common">Human</name>
    <dbReference type="NCBI Taxonomy" id="9606"/>
    <lineage>
        <taxon>Eukaryota</taxon>
        <taxon>Metazoa</taxon>
        <taxon>Chordata</taxon>
        <taxon>Craniata</taxon>
        <taxon>Vertebrata</taxon>
        <taxon>Euteleostomi</taxon>
        <taxon>Mammalia</taxon>
        <taxon>Eutheria</taxon>
        <taxon>Euarchontoglires</taxon>
        <taxon>Primates</taxon>
        <taxon>Haplorrhini</taxon>
        <taxon>Catarrhini</taxon>
        <taxon>Hominidae</taxon>
        <taxon>Homo</taxon>
    </lineage>
</organism>
<keyword id="KW-0002">3D-structure</keyword>
<keyword id="KW-0963">Cytoplasm</keyword>
<keyword id="KW-0460">Magnesium</keyword>
<keyword id="KW-0479">Metal-binding</keyword>
<keyword id="KW-0489">Methyltransferase</keyword>
<keyword id="KW-1267">Proteomics identification</keyword>
<keyword id="KW-1185">Reference proteome</keyword>
<keyword id="KW-0694">RNA-binding</keyword>
<keyword id="KW-0943">RNA-mediated gene silencing</keyword>
<keyword id="KW-0949">S-adenosyl-L-methionine</keyword>
<keyword id="KW-0808">Transferase</keyword>
<sequence length="393" mass="44525">MEENNLQCSSVVDGNFEEVPRETAIQFKPPLYRQRYQFVKNLVDQHEPKKVADLGCGDTSLLRLLKVNPCIELLVGVDINEDKLRWRGDSLAPFLGDFLKPRDLNLTITLYHGSVVERDSRLLGFDLITCIELIEHLDSGDLARFPEVVFGYLSPSMIVISTPNSEFNPLFPSVTLRDSDHKFEWTRMEFQTWALYVANRYDYSVEFTGVGEPPAGAENVGYCTQIGIFRKNGGKATESCLSEQHDQHVYKAVFTTSYPSLQQERFFKLVLVNEVSQQVESLRVSHLPRRKEQAGERGDKPKDIGGSKAPVPCFGPVFTEVEKAKIENSPTPFCVGDKFFVPLQRLLAYPKLNRLCANEEMMRSVIADSIPLSSDGSAVVADLRNYFDEQFEF</sequence>
<dbReference type="EC" id="2.1.1.386" evidence="2"/>
<dbReference type="EMBL" id="AK055087">
    <property type="protein sequence ID" value="BAB70852.1"/>
    <property type="molecule type" value="mRNA"/>
</dbReference>
<dbReference type="EMBL" id="AL160171">
    <property type="status" value="NOT_ANNOTATED_CDS"/>
    <property type="molecule type" value="Genomic_DNA"/>
</dbReference>
<dbReference type="EMBL" id="CH471122">
    <property type="protein sequence ID" value="EAW56326.1"/>
    <property type="molecule type" value="Genomic_DNA"/>
</dbReference>
<dbReference type="EMBL" id="BC012198">
    <property type="protein sequence ID" value="AAH12198.1"/>
    <property type="molecule type" value="mRNA"/>
</dbReference>
<dbReference type="EMBL" id="BC088366">
    <property type="protein sequence ID" value="AAH88366.1"/>
    <property type="molecule type" value="mRNA"/>
</dbReference>
<dbReference type="CCDS" id="CCDS787.1"/>
<dbReference type="RefSeq" id="NP_001096062.1">
    <property type="nucleotide sequence ID" value="NM_001102592.2"/>
</dbReference>
<dbReference type="RefSeq" id="NP_653185.2">
    <property type="nucleotide sequence ID" value="NM_144584.3"/>
</dbReference>
<dbReference type="PDB" id="4XCX">
    <property type="method" value="X-ray"/>
    <property type="resolution" value="2.84 A"/>
    <property type="chains" value="A=14-262"/>
</dbReference>
<dbReference type="PDB" id="5WY0">
    <property type="method" value="X-ray"/>
    <property type="resolution" value="2.00 A"/>
    <property type="chains" value="A=31-258"/>
</dbReference>
<dbReference type="PDBsum" id="4XCX"/>
<dbReference type="PDBsum" id="5WY0"/>
<dbReference type="SMR" id="Q5T8I9"/>
<dbReference type="BioGRID" id="125261">
    <property type="interactions" value="11"/>
</dbReference>
<dbReference type="FunCoup" id="Q5T8I9">
    <property type="interactions" value="515"/>
</dbReference>
<dbReference type="IntAct" id="Q5T8I9">
    <property type="interactions" value="12"/>
</dbReference>
<dbReference type="MINT" id="Q5T8I9"/>
<dbReference type="STRING" id="9606.ENSP00000359049"/>
<dbReference type="GlyGen" id="Q5T8I9">
    <property type="glycosylation" value="1 site, 1 O-linked glycan (1 site)"/>
</dbReference>
<dbReference type="iPTMnet" id="Q5T8I9"/>
<dbReference type="PhosphoSitePlus" id="Q5T8I9"/>
<dbReference type="BioMuta" id="HENMT1"/>
<dbReference type="DMDM" id="74745527"/>
<dbReference type="jPOST" id="Q5T8I9"/>
<dbReference type="MassIVE" id="Q5T8I9"/>
<dbReference type="PaxDb" id="9606-ENSP00000359049"/>
<dbReference type="PeptideAtlas" id="Q5T8I9"/>
<dbReference type="ProteomicsDB" id="64735"/>
<dbReference type="Pumba" id="Q5T8I9"/>
<dbReference type="Antibodypedia" id="33732">
    <property type="antibodies" value="47 antibodies from 14 providers"/>
</dbReference>
<dbReference type="DNASU" id="113802"/>
<dbReference type="Ensembl" id="ENST00000370032.9">
    <property type="protein sequence ID" value="ENSP00000359049.5"/>
    <property type="gene ID" value="ENSG00000162639.16"/>
</dbReference>
<dbReference type="Ensembl" id="ENST00000402983.5">
    <property type="protein sequence ID" value="ENSP00000385655.1"/>
    <property type="gene ID" value="ENSG00000162639.16"/>
</dbReference>
<dbReference type="Ensembl" id="ENST00000651461.1">
    <property type="protein sequence ID" value="ENSP00000499017.1"/>
    <property type="gene ID" value="ENSG00000162639.16"/>
</dbReference>
<dbReference type="GeneID" id="113802"/>
<dbReference type="KEGG" id="hsa:113802"/>
<dbReference type="MANE-Select" id="ENST00000651461.1">
    <property type="protein sequence ID" value="ENSP00000499017.1"/>
    <property type="RefSeq nucleotide sequence ID" value="NM_001102592.2"/>
    <property type="RefSeq protein sequence ID" value="NP_001096062.1"/>
</dbReference>
<dbReference type="UCSC" id="uc001dvt.5">
    <property type="organism name" value="human"/>
</dbReference>
<dbReference type="AGR" id="HGNC:26400"/>
<dbReference type="CTD" id="113802"/>
<dbReference type="DisGeNET" id="113802"/>
<dbReference type="GeneCards" id="HENMT1"/>
<dbReference type="HGNC" id="HGNC:26400">
    <property type="gene designation" value="HENMT1"/>
</dbReference>
<dbReference type="HPA" id="ENSG00000162639">
    <property type="expression patterns" value="Tissue enhanced (testis)"/>
</dbReference>
<dbReference type="MalaCards" id="HENMT1"/>
<dbReference type="MIM" id="612178">
    <property type="type" value="gene"/>
</dbReference>
<dbReference type="neXtProt" id="NX_Q5T8I9"/>
<dbReference type="OpenTargets" id="ENSG00000162639"/>
<dbReference type="PharmGKB" id="PA128394748"/>
<dbReference type="VEuPathDB" id="HostDB:ENSG00000162639"/>
<dbReference type="eggNOG" id="KOG1045">
    <property type="taxonomic scope" value="Eukaryota"/>
</dbReference>
<dbReference type="GeneTree" id="ENSGT00390000004798"/>
<dbReference type="HOGENOM" id="CLU_044646_0_0_1"/>
<dbReference type="InParanoid" id="Q5T8I9"/>
<dbReference type="OMA" id="HQFVVDF"/>
<dbReference type="OrthoDB" id="2154311at2759"/>
<dbReference type="PAN-GO" id="Q5T8I9">
    <property type="GO annotations" value="6 GO annotations based on evolutionary models"/>
</dbReference>
<dbReference type="PhylomeDB" id="Q5T8I9"/>
<dbReference type="TreeFam" id="TF315178"/>
<dbReference type="PathwayCommons" id="Q5T8I9"/>
<dbReference type="Reactome" id="R-HSA-5601884">
    <property type="pathway name" value="PIWI-interacting RNA (piRNA) biogenesis"/>
</dbReference>
<dbReference type="SignaLink" id="Q5T8I9"/>
<dbReference type="BioGRID-ORCS" id="113802">
    <property type="hits" value="23 hits in 1147 CRISPR screens"/>
</dbReference>
<dbReference type="ChiTaRS" id="HENMT1">
    <property type="organism name" value="human"/>
</dbReference>
<dbReference type="EvolutionaryTrace" id="Q5T8I9"/>
<dbReference type="GenomeRNAi" id="113802"/>
<dbReference type="Pharos" id="Q5T8I9">
    <property type="development level" value="Tdark"/>
</dbReference>
<dbReference type="PRO" id="PR:Q5T8I9"/>
<dbReference type="Proteomes" id="UP000005640">
    <property type="component" value="Chromosome 1"/>
</dbReference>
<dbReference type="RNAct" id="Q5T8I9">
    <property type="molecule type" value="protein"/>
</dbReference>
<dbReference type="Bgee" id="ENSG00000162639">
    <property type="expression patterns" value="Expressed in oocyte and 159 other cell types or tissues"/>
</dbReference>
<dbReference type="ExpressionAtlas" id="Q5T8I9">
    <property type="expression patterns" value="baseline and differential"/>
</dbReference>
<dbReference type="GO" id="GO:0005737">
    <property type="term" value="C:cytoplasm"/>
    <property type="evidence" value="ECO:0000318"/>
    <property type="project" value="GO_Central"/>
</dbReference>
<dbReference type="GO" id="GO:0005634">
    <property type="term" value="C:nucleus"/>
    <property type="evidence" value="ECO:0000318"/>
    <property type="project" value="GO_Central"/>
</dbReference>
<dbReference type="GO" id="GO:0043186">
    <property type="term" value="C:P granule"/>
    <property type="evidence" value="ECO:0000250"/>
    <property type="project" value="UniProtKB"/>
</dbReference>
<dbReference type="GO" id="GO:0046872">
    <property type="term" value="F:metal ion binding"/>
    <property type="evidence" value="ECO:0007669"/>
    <property type="project" value="UniProtKB-KW"/>
</dbReference>
<dbReference type="GO" id="GO:0008171">
    <property type="term" value="F:O-methyltransferase activity"/>
    <property type="evidence" value="ECO:0000250"/>
    <property type="project" value="UniProtKB"/>
</dbReference>
<dbReference type="GO" id="GO:0003723">
    <property type="term" value="F:RNA binding"/>
    <property type="evidence" value="ECO:0007669"/>
    <property type="project" value="UniProtKB-KW"/>
</dbReference>
<dbReference type="GO" id="GO:0008173">
    <property type="term" value="F:RNA methyltransferase activity"/>
    <property type="evidence" value="ECO:0000250"/>
    <property type="project" value="UniProtKB"/>
</dbReference>
<dbReference type="GO" id="GO:0090486">
    <property type="term" value="F:small RNA 2'-O-methyltransferase activity"/>
    <property type="evidence" value="ECO:0000314"/>
    <property type="project" value="FlyBase"/>
</dbReference>
<dbReference type="GO" id="GO:0034587">
    <property type="term" value="P:piRNA processing"/>
    <property type="evidence" value="ECO:0000250"/>
    <property type="project" value="UniProtKB"/>
</dbReference>
<dbReference type="GO" id="GO:0001510">
    <property type="term" value="P:RNA methylation"/>
    <property type="evidence" value="ECO:0000314"/>
    <property type="project" value="FlyBase"/>
</dbReference>
<dbReference type="GO" id="GO:0030422">
    <property type="term" value="P:siRNA processing"/>
    <property type="evidence" value="ECO:0000318"/>
    <property type="project" value="GO_Central"/>
</dbReference>
<dbReference type="FunFam" id="3.40.50.150:FF:000124">
    <property type="entry name" value="HEN methyltransferase 1"/>
    <property type="match status" value="1"/>
</dbReference>
<dbReference type="Gene3D" id="3.40.50.150">
    <property type="entry name" value="Vaccinia Virus protein VP39"/>
    <property type="match status" value="1"/>
</dbReference>
<dbReference type="InterPro" id="IPR026610">
    <property type="entry name" value="Hen1"/>
</dbReference>
<dbReference type="InterPro" id="IPR029063">
    <property type="entry name" value="SAM-dependent_MTases_sf"/>
</dbReference>
<dbReference type="PANTHER" id="PTHR21404">
    <property type="entry name" value="HEN1"/>
    <property type="match status" value="1"/>
</dbReference>
<dbReference type="PANTHER" id="PTHR21404:SF3">
    <property type="entry name" value="SMALL RNA 2'-O-METHYLTRANSFERASE"/>
    <property type="match status" value="1"/>
</dbReference>
<dbReference type="Pfam" id="PF13489">
    <property type="entry name" value="Methyltransf_23"/>
    <property type="match status" value="1"/>
</dbReference>
<dbReference type="SUPFAM" id="SSF53335">
    <property type="entry name" value="S-adenosyl-L-methionine-dependent methyltransferases"/>
    <property type="match status" value="1"/>
</dbReference>
<gene>
    <name type="primary">HENMT1</name>
    <name type="synonym">C1orf59</name>
</gene>
<name>HENMT_HUMAN</name>
<accession>Q5T8I9</accession>
<accession>A8MRR6</accession>
<accession>B1AM16</accession>
<accession>B1AM17</accession>
<accession>Q96EJ7</accession>
<accession>Q96NN0</accession>
<feature type="chain" id="PRO_0000304139" description="Small RNA 2'-O-methyltransferase">
    <location>
        <begin position="1"/>
        <end position="393"/>
    </location>
</feature>
<feature type="region of interest" description="Disordered" evidence="4">
    <location>
        <begin position="286"/>
        <end position="307"/>
    </location>
</feature>
<feature type="compositionally biased region" description="Basic and acidic residues" evidence="4">
    <location>
        <begin position="290"/>
        <end position="305"/>
    </location>
</feature>
<feature type="binding site" evidence="6 8">
    <location>
        <position position="36"/>
    </location>
    <ligand>
        <name>S-adenosyl-L-methionine</name>
        <dbReference type="ChEBI" id="CHEBI:59789"/>
    </ligand>
</feature>
<feature type="binding site" evidence="6 8">
    <location>
        <position position="55"/>
    </location>
    <ligand>
        <name>S-adenosyl-L-methionine</name>
        <dbReference type="ChEBI" id="CHEBI:59789"/>
    </ligand>
</feature>
<feature type="binding site" evidence="6 8">
    <location>
        <position position="78"/>
    </location>
    <ligand>
        <name>S-adenosyl-L-methionine</name>
        <dbReference type="ChEBI" id="CHEBI:59789"/>
    </ligand>
</feature>
<feature type="binding site" evidence="6 8">
    <location>
        <position position="83"/>
    </location>
    <ligand>
        <name>S-adenosyl-L-methionine</name>
        <dbReference type="ChEBI" id="CHEBI:59789"/>
    </ligand>
</feature>
<feature type="binding site" evidence="8">
    <location>
        <position position="115"/>
    </location>
    <ligand>
        <name>S-adenosyl-L-methionine</name>
        <dbReference type="ChEBI" id="CHEBI:59789"/>
    </ligand>
</feature>
<feature type="binding site" evidence="8">
    <location>
        <position position="131"/>
    </location>
    <ligand>
        <name>S-adenosyl-L-methionine</name>
        <dbReference type="ChEBI" id="CHEBI:59789"/>
    </ligand>
</feature>
<feature type="binding site" evidence="3">
    <location>
        <position position="132"/>
    </location>
    <ligand>
        <name>Mg(2+)</name>
        <dbReference type="ChEBI" id="CHEBI:18420"/>
    </ligand>
</feature>
<feature type="binding site" evidence="3">
    <location>
        <position position="135"/>
    </location>
    <ligand>
        <name>Mg(2+)</name>
        <dbReference type="ChEBI" id="CHEBI:18420"/>
    </ligand>
</feature>
<feature type="binding site" evidence="3">
    <location>
        <position position="136"/>
    </location>
    <ligand>
        <name>Mg(2+)</name>
        <dbReference type="ChEBI" id="CHEBI:18420"/>
    </ligand>
</feature>
<feature type="binding site" evidence="3">
    <location>
        <position position="181"/>
    </location>
    <ligand>
        <name>Mg(2+)</name>
        <dbReference type="ChEBI" id="CHEBI:18420"/>
    </ligand>
</feature>
<feature type="sequence variant" id="VAR_035017" description="In dbSNP:rs9988420.">
    <original>T</original>
    <variation>A</variation>
    <location>
        <position position="129"/>
    </location>
</feature>
<feature type="sequence variant" id="VAR_035018" description="In dbSNP:rs35974434.">
    <original>R</original>
    <variation>Q</variation>
    <location>
        <position position="230"/>
    </location>
</feature>
<feature type="sequence variant" id="VAR_035019" description="In dbSNP:rs17850887." evidence="5">
    <original>M</original>
    <variation>I</variation>
    <location>
        <position position="361"/>
    </location>
</feature>
<feature type="sequence conflict" description="In Ref. 1; BAB70852." evidence="7" ref="1">
    <original>S</original>
    <variation>F</variation>
    <location>
        <position position="154"/>
    </location>
</feature>
<feature type="sequence conflict" description="In Ref. 1; BAB70852." evidence="7" ref="1">
    <original>V</original>
    <variation>A</variation>
    <location>
        <position position="365"/>
    </location>
</feature>
<feature type="helix" evidence="10">
    <location>
        <begin position="31"/>
        <end position="46"/>
    </location>
</feature>
<feature type="strand" evidence="10">
    <location>
        <begin position="49"/>
        <end position="54"/>
    </location>
</feature>
<feature type="helix" evidence="10">
    <location>
        <begin position="60"/>
        <end position="65"/>
    </location>
</feature>
<feature type="strand" evidence="10">
    <location>
        <begin position="72"/>
        <end position="79"/>
    </location>
</feature>
<feature type="helix" evidence="10">
    <location>
        <begin position="81"/>
        <end position="84"/>
    </location>
</feature>
<feature type="helix" evidence="9">
    <location>
        <begin position="89"/>
        <end position="91"/>
    </location>
</feature>
<feature type="helix" evidence="9">
    <location>
        <begin position="95"/>
        <end position="99"/>
    </location>
</feature>
<feature type="strand" evidence="9">
    <location>
        <begin position="102"/>
        <end position="104"/>
    </location>
</feature>
<feature type="strand" evidence="10">
    <location>
        <begin position="106"/>
        <end position="112"/>
    </location>
</feature>
<feature type="helix" evidence="10">
    <location>
        <begin position="120"/>
        <end position="122"/>
    </location>
</feature>
<feature type="strand" evidence="10">
    <location>
        <begin position="126"/>
        <end position="132"/>
    </location>
</feature>
<feature type="helix" evidence="10">
    <location>
        <begin position="134"/>
        <end position="136"/>
    </location>
</feature>
<feature type="helix" evidence="10">
    <location>
        <begin position="139"/>
        <end position="149"/>
    </location>
</feature>
<feature type="turn" evidence="10">
    <location>
        <begin position="150"/>
        <end position="153"/>
    </location>
</feature>
<feature type="strand" evidence="10">
    <location>
        <begin position="156"/>
        <end position="164"/>
    </location>
</feature>
<feature type="helix" evidence="9">
    <location>
        <begin position="165"/>
        <end position="167"/>
    </location>
</feature>
<feature type="helix" evidence="10">
    <location>
        <begin position="178"/>
        <end position="180"/>
    </location>
</feature>
<feature type="helix" evidence="10">
    <location>
        <begin position="187"/>
        <end position="201"/>
    </location>
</feature>
<feature type="strand" evidence="10">
    <location>
        <begin position="203"/>
        <end position="210"/>
    </location>
</feature>
<feature type="helix" evidence="9">
    <location>
        <begin position="218"/>
        <end position="220"/>
    </location>
</feature>
<feature type="strand" evidence="10">
    <location>
        <begin position="223"/>
        <end position="231"/>
    </location>
</feature>
<feature type="strand" evidence="10">
    <location>
        <begin position="250"/>
        <end position="258"/>
    </location>
</feature>
<comment type="function">
    <text evidence="2">Methyltransferase that adds a 2'-O-methyl group at the 3'-end of piRNAs, a class of 24 to 30 nucleotide RNAs that are generated by a Dicer-independent mechanism and are primarily derived from transposons and other repeated sequence elements. This probably protects the 3'-end of piRNAs from uridylation activity and subsequent degradation. Stabilization of piRNAs is essential for gametogenesis.</text>
</comment>
<comment type="catalytic activity">
    <reaction evidence="2">
        <text>small RNA 3'-end nucleotide + S-adenosyl-L-methionine = small RNA 3'-end 2'-O-methylnucleotide + S-adenosyl-L-homocysteine + H(+)</text>
        <dbReference type="Rhea" id="RHEA:37887"/>
        <dbReference type="Rhea" id="RHEA-COMP:10415"/>
        <dbReference type="Rhea" id="RHEA-COMP:10416"/>
        <dbReference type="ChEBI" id="CHEBI:15378"/>
        <dbReference type="ChEBI" id="CHEBI:57856"/>
        <dbReference type="ChEBI" id="CHEBI:59789"/>
        <dbReference type="ChEBI" id="CHEBI:74896"/>
        <dbReference type="ChEBI" id="CHEBI:74898"/>
        <dbReference type="EC" id="2.1.1.386"/>
    </reaction>
</comment>
<comment type="cofactor">
    <cofactor evidence="3">
        <name>Mg(2+)</name>
        <dbReference type="ChEBI" id="CHEBI:18420"/>
    </cofactor>
    <text evidence="3">Binds 1 Mg(2+) ion per subunit.</text>
</comment>
<comment type="interaction">
    <interactant intactId="EBI-9675710">
        <id>Q5T8I9</id>
    </interactant>
    <interactant intactId="EBI-17967022">
        <id>Q96LY2-2</id>
        <label>CCDC74B</label>
    </interactant>
    <organismsDiffer>false</organismsDiffer>
    <experiments>3</experiments>
</comment>
<comment type="interaction">
    <interactant intactId="EBI-9675710">
        <id>Q5T8I9</id>
    </interactant>
    <interactant intactId="EBI-6509505">
        <id>Q0VD86</id>
        <label>INCA1</label>
    </interactant>
    <organismsDiffer>false</organismsDiffer>
    <experiments>3</experiments>
</comment>
<comment type="interaction">
    <interactant intactId="EBI-9675710">
        <id>Q5T8I9</id>
    </interactant>
    <interactant intactId="EBI-355744">
        <id>Q12933</id>
        <label>TRAF2</label>
    </interactant>
    <organismsDiffer>false</organismsDiffer>
    <experiments>3</experiments>
</comment>
<comment type="interaction">
    <interactant intactId="EBI-9675710">
        <id>Q5T8I9</id>
    </interactant>
    <interactant intactId="EBI-9675698">
        <id>P14079</id>
        <label>tax</label>
    </interactant>
    <organismsDiffer>true</organismsDiffer>
    <experiments>3</experiments>
</comment>
<comment type="subcellular location">
    <subcellularLocation>
        <location evidence="1">Cytoplasm</location>
    </subcellularLocation>
    <text evidence="1">Component of the meiotic nuage, also named P granule, a germ-cell-specific organelle required to repress transposon activity during meiosis.</text>
</comment>
<comment type="similarity">
    <text evidence="7">Belongs to the methyltransferase superfamily. HEN1 family.</text>
</comment>
<protein>
    <recommendedName>
        <fullName>Small RNA 2'-O-methyltransferase</fullName>
        <ecNumber evidence="2">2.1.1.386</ecNumber>
    </recommendedName>
    <alternativeName>
        <fullName>HEN1 methyltransferase homolog 1</fullName>
    </alternativeName>
</protein>
<reference key="1">
    <citation type="journal article" date="2004" name="Nat. Genet.">
        <title>Complete sequencing and characterization of 21,243 full-length human cDNAs.</title>
        <authorList>
            <person name="Ota T."/>
            <person name="Suzuki Y."/>
            <person name="Nishikawa T."/>
            <person name="Otsuki T."/>
            <person name="Sugiyama T."/>
            <person name="Irie R."/>
            <person name="Wakamatsu A."/>
            <person name="Hayashi K."/>
            <person name="Sato H."/>
            <person name="Nagai K."/>
            <person name="Kimura K."/>
            <person name="Makita H."/>
            <person name="Sekine M."/>
            <person name="Obayashi M."/>
            <person name="Nishi T."/>
            <person name="Shibahara T."/>
            <person name="Tanaka T."/>
            <person name="Ishii S."/>
            <person name="Yamamoto J."/>
            <person name="Saito K."/>
            <person name="Kawai Y."/>
            <person name="Isono Y."/>
            <person name="Nakamura Y."/>
            <person name="Nagahari K."/>
            <person name="Murakami K."/>
            <person name="Yasuda T."/>
            <person name="Iwayanagi T."/>
            <person name="Wagatsuma M."/>
            <person name="Shiratori A."/>
            <person name="Sudo H."/>
            <person name="Hosoiri T."/>
            <person name="Kaku Y."/>
            <person name="Kodaira H."/>
            <person name="Kondo H."/>
            <person name="Sugawara M."/>
            <person name="Takahashi M."/>
            <person name="Kanda K."/>
            <person name="Yokoi T."/>
            <person name="Furuya T."/>
            <person name="Kikkawa E."/>
            <person name="Omura Y."/>
            <person name="Abe K."/>
            <person name="Kamihara K."/>
            <person name="Katsuta N."/>
            <person name="Sato K."/>
            <person name="Tanikawa M."/>
            <person name="Yamazaki M."/>
            <person name="Ninomiya K."/>
            <person name="Ishibashi T."/>
            <person name="Yamashita H."/>
            <person name="Murakawa K."/>
            <person name="Fujimori K."/>
            <person name="Tanai H."/>
            <person name="Kimata M."/>
            <person name="Watanabe M."/>
            <person name="Hiraoka S."/>
            <person name="Chiba Y."/>
            <person name="Ishida S."/>
            <person name="Ono Y."/>
            <person name="Takiguchi S."/>
            <person name="Watanabe S."/>
            <person name="Yosida M."/>
            <person name="Hotuta T."/>
            <person name="Kusano J."/>
            <person name="Kanehori K."/>
            <person name="Takahashi-Fujii A."/>
            <person name="Hara H."/>
            <person name="Tanase T.-O."/>
            <person name="Nomura Y."/>
            <person name="Togiya S."/>
            <person name="Komai F."/>
            <person name="Hara R."/>
            <person name="Takeuchi K."/>
            <person name="Arita M."/>
            <person name="Imose N."/>
            <person name="Musashino K."/>
            <person name="Yuuki H."/>
            <person name="Oshima A."/>
            <person name="Sasaki N."/>
            <person name="Aotsuka S."/>
            <person name="Yoshikawa Y."/>
            <person name="Matsunawa H."/>
            <person name="Ichihara T."/>
            <person name="Shiohata N."/>
            <person name="Sano S."/>
            <person name="Moriya S."/>
            <person name="Momiyama H."/>
            <person name="Satoh N."/>
            <person name="Takami S."/>
            <person name="Terashima Y."/>
            <person name="Suzuki O."/>
            <person name="Nakagawa S."/>
            <person name="Senoh A."/>
            <person name="Mizoguchi H."/>
            <person name="Goto Y."/>
            <person name="Shimizu F."/>
            <person name="Wakebe H."/>
            <person name="Hishigaki H."/>
            <person name="Watanabe T."/>
            <person name="Sugiyama A."/>
            <person name="Takemoto M."/>
            <person name="Kawakami B."/>
            <person name="Yamazaki M."/>
            <person name="Watanabe K."/>
            <person name="Kumagai A."/>
            <person name="Itakura S."/>
            <person name="Fukuzumi Y."/>
            <person name="Fujimori Y."/>
            <person name="Komiyama M."/>
            <person name="Tashiro H."/>
            <person name="Tanigami A."/>
            <person name="Fujiwara T."/>
            <person name="Ono T."/>
            <person name="Yamada K."/>
            <person name="Fujii Y."/>
            <person name="Ozaki K."/>
            <person name="Hirao M."/>
            <person name="Ohmori Y."/>
            <person name="Kawabata A."/>
            <person name="Hikiji T."/>
            <person name="Kobatake N."/>
            <person name="Inagaki H."/>
            <person name="Ikema Y."/>
            <person name="Okamoto S."/>
            <person name="Okitani R."/>
            <person name="Kawakami T."/>
            <person name="Noguchi S."/>
            <person name="Itoh T."/>
            <person name="Shigeta K."/>
            <person name="Senba T."/>
            <person name="Matsumura K."/>
            <person name="Nakajima Y."/>
            <person name="Mizuno T."/>
            <person name="Morinaga M."/>
            <person name="Sasaki M."/>
            <person name="Togashi T."/>
            <person name="Oyama M."/>
            <person name="Hata H."/>
            <person name="Watanabe M."/>
            <person name="Komatsu T."/>
            <person name="Mizushima-Sugano J."/>
            <person name="Satoh T."/>
            <person name="Shirai Y."/>
            <person name="Takahashi Y."/>
            <person name="Nakagawa K."/>
            <person name="Okumura K."/>
            <person name="Nagase T."/>
            <person name="Nomura N."/>
            <person name="Kikuchi H."/>
            <person name="Masuho Y."/>
            <person name="Yamashita R."/>
            <person name="Nakai K."/>
            <person name="Yada T."/>
            <person name="Nakamura Y."/>
            <person name="Ohara O."/>
            <person name="Isogai T."/>
            <person name="Sugano S."/>
        </authorList>
    </citation>
    <scope>NUCLEOTIDE SEQUENCE [LARGE SCALE MRNA]</scope>
    <source>
        <tissue>Brain</tissue>
    </source>
</reference>
<reference key="2">
    <citation type="journal article" date="2006" name="Nature">
        <title>The DNA sequence and biological annotation of human chromosome 1.</title>
        <authorList>
            <person name="Gregory S.G."/>
            <person name="Barlow K.F."/>
            <person name="McLay K.E."/>
            <person name="Kaul R."/>
            <person name="Swarbreck D."/>
            <person name="Dunham A."/>
            <person name="Scott C.E."/>
            <person name="Howe K.L."/>
            <person name="Woodfine K."/>
            <person name="Spencer C.C.A."/>
            <person name="Jones M.C."/>
            <person name="Gillson C."/>
            <person name="Searle S."/>
            <person name="Zhou Y."/>
            <person name="Kokocinski F."/>
            <person name="McDonald L."/>
            <person name="Evans R."/>
            <person name="Phillips K."/>
            <person name="Atkinson A."/>
            <person name="Cooper R."/>
            <person name="Jones C."/>
            <person name="Hall R.E."/>
            <person name="Andrews T.D."/>
            <person name="Lloyd C."/>
            <person name="Ainscough R."/>
            <person name="Almeida J.P."/>
            <person name="Ambrose K.D."/>
            <person name="Anderson F."/>
            <person name="Andrew R.W."/>
            <person name="Ashwell R.I.S."/>
            <person name="Aubin K."/>
            <person name="Babbage A.K."/>
            <person name="Bagguley C.L."/>
            <person name="Bailey J."/>
            <person name="Beasley H."/>
            <person name="Bethel G."/>
            <person name="Bird C.P."/>
            <person name="Bray-Allen S."/>
            <person name="Brown J.Y."/>
            <person name="Brown A.J."/>
            <person name="Buckley D."/>
            <person name="Burton J."/>
            <person name="Bye J."/>
            <person name="Carder C."/>
            <person name="Chapman J.C."/>
            <person name="Clark S.Y."/>
            <person name="Clarke G."/>
            <person name="Clee C."/>
            <person name="Cobley V."/>
            <person name="Collier R.E."/>
            <person name="Corby N."/>
            <person name="Coville G.J."/>
            <person name="Davies J."/>
            <person name="Deadman R."/>
            <person name="Dunn M."/>
            <person name="Earthrowl M."/>
            <person name="Ellington A.G."/>
            <person name="Errington H."/>
            <person name="Frankish A."/>
            <person name="Frankland J."/>
            <person name="French L."/>
            <person name="Garner P."/>
            <person name="Garnett J."/>
            <person name="Gay L."/>
            <person name="Ghori M.R.J."/>
            <person name="Gibson R."/>
            <person name="Gilby L.M."/>
            <person name="Gillett W."/>
            <person name="Glithero R.J."/>
            <person name="Grafham D.V."/>
            <person name="Griffiths C."/>
            <person name="Griffiths-Jones S."/>
            <person name="Grocock R."/>
            <person name="Hammond S."/>
            <person name="Harrison E.S.I."/>
            <person name="Hart E."/>
            <person name="Haugen E."/>
            <person name="Heath P.D."/>
            <person name="Holmes S."/>
            <person name="Holt K."/>
            <person name="Howden P.J."/>
            <person name="Hunt A.R."/>
            <person name="Hunt S.E."/>
            <person name="Hunter G."/>
            <person name="Isherwood J."/>
            <person name="James R."/>
            <person name="Johnson C."/>
            <person name="Johnson D."/>
            <person name="Joy A."/>
            <person name="Kay M."/>
            <person name="Kershaw J.K."/>
            <person name="Kibukawa M."/>
            <person name="Kimberley A.M."/>
            <person name="King A."/>
            <person name="Knights A.J."/>
            <person name="Lad H."/>
            <person name="Laird G."/>
            <person name="Lawlor S."/>
            <person name="Leongamornlert D.A."/>
            <person name="Lloyd D.M."/>
            <person name="Loveland J."/>
            <person name="Lovell J."/>
            <person name="Lush M.J."/>
            <person name="Lyne R."/>
            <person name="Martin S."/>
            <person name="Mashreghi-Mohammadi M."/>
            <person name="Matthews L."/>
            <person name="Matthews N.S.W."/>
            <person name="McLaren S."/>
            <person name="Milne S."/>
            <person name="Mistry S."/>
            <person name="Moore M.J.F."/>
            <person name="Nickerson T."/>
            <person name="O'Dell C.N."/>
            <person name="Oliver K."/>
            <person name="Palmeiri A."/>
            <person name="Palmer S.A."/>
            <person name="Parker A."/>
            <person name="Patel D."/>
            <person name="Pearce A.V."/>
            <person name="Peck A.I."/>
            <person name="Pelan S."/>
            <person name="Phelps K."/>
            <person name="Phillimore B.J."/>
            <person name="Plumb R."/>
            <person name="Rajan J."/>
            <person name="Raymond C."/>
            <person name="Rouse G."/>
            <person name="Saenphimmachak C."/>
            <person name="Sehra H.K."/>
            <person name="Sheridan E."/>
            <person name="Shownkeen R."/>
            <person name="Sims S."/>
            <person name="Skuce C.D."/>
            <person name="Smith M."/>
            <person name="Steward C."/>
            <person name="Subramanian S."/>
            <person name="Sycamore N."/>
            <person name="Tracey A."/>
            <person name="Tromans A."/>
            <person name="Van Helmond Z."/>
            <person name="Wall M."/>
            <person name="Wallis J.M."/>
            <person name="White S."/>
            <person name="Whitehead S.L."/>
            <person name="Wilkinson J.E."/>
            <person name="Willey D.L."/>
            <person name="Williams H."/>
            <person name="Wilming L."/>
            <person name="Wray P.W."/>
            <person name="Wu Z."/>
            <person name="Coulson A."/>
            <person name="Vaudin M."/>
            <person name="Sulston J.E."/>
            <person name="Durbin R.M."/>
            <person name="Hubbard T."/>
            <person name="Wooster R."/>
            <person name="Dunham I."/>
            <person name="Carter N.P."/>
            <person name="McVean G."/>
            <person name="Ross M.T."/>
            <person name="Harrow J."/>
            <person name="Olson M.V."/>
            <person name="Beck S."/>
            <person name="Rogers J."/>
            <person name="Bentley D.R."/>
        </authorList>
    </citation>
    <scope>NUCLEOTIDE SEQUENCE [LARGE SCALE GENOMIC DNA]</scope>
</reference>
<reference key="3">
    <citation type="submission" date="2005-07" db="EMBL/GenBank/DDBJ databases">
        <authorList>
            <person name="Mural R.J."/>
            <person name="Istrail S."/>
            <person name="Sutton G.G."/>
            <person name="Florea L."/>
            <person name="Halpern A.L."/>
            <person name="Mobarry C.M."/>
            <person name="Lippert R."/>
            <person name="Walenz B."/>
            <person name="Shatkay H."/>
            <person name="Dew I."/>
            <person name="Miller J.R."/>
            <person name="Flanigan M.J."/>
            <person name="Edwards N.J."/>
            <person name="Bolanos R."/>
            <person name="Fasulo D."/>
            <person name="Halldorsson B.V."/>
            <person name="Hannenhalli S."/>
            <person name="Turner R."/>
            <person name="Yooseph S."/>
            <person name="Lu F."/>
            <person name="Nusskern D.R."/>
            <person name="Shue B.C."/>
            <person name="Zheng X.H."/>
            <person name="Zhong F."/>
            <person name="Delcher A.L."/>
            <person name="Huson D.H."/>
            <person name="Kravitz S.A."/>
            <person name="Mouchard L."/>
            <person name="Reinert K."/>
            <person name="Remington K.A."/>
            <person name="Clark A.G."/>
            <person name="Waterman M.S."/>
            <person name="Eichler E.E."/>
            <person name="Adams M.D."/>
            <person name="Hunkapiller M.W."/>
            <person name="Myers E.W."/>
            <person name="Venter J.C."/>
        </authorList>
    </citation>
    <scope>NUCLEOTIDE SEQUENCE [LARGE SCALE GENOMIC DNA]</scope>
</reference>
<reference key="4">
    <citation type="journal article" date="2004" name="Genome Res.">
        <title>The status, quality, and expansion of the NIH full-length cDNA project: the Mammalian Gene Collection (MGC).</title>
        <authorList>
            <consortium name="The MGC Project Team"/>
        </authorList>
    </citation>
    <scope>NUCLEOTIDE SEQUENCE [LARGE SCALE MRNA]</scope>
    <scope>VARIANT ILE-361</scope>
    <source>
        <tissue>Skin</tissue>
        <tissue>Testis</tissue>
    </source>
</reference>
<reference key="5">
    <citation type="submission" date="2014-12" db="PDB data bank">
        <title>Crystal structure of human C1ORF59 in complex with SAH.</title>
        <authorList>
            <person name="Walker J.R."/>
            <person name="Zeng H."/>
            <person name="Dong A."/>
            <person name="Li Y."/>
            <person name="Wernimont A."/>
            <person name="Bountra C."/>
            <person name="Arrowsmith C.H."/>
            <person name="Edwards A.M."/>
            <person name="Brown P.J."/>
            <person name="Wu H."/>
        </authorList>
    </citation>
    <scope>X-RAY CRYSTALLOGRAPHY (2.84 ANGSTROMS) OF 14-262 IN COMPLEX WITH S-ADENOSYL-L-HOMOCYSTEINE</scope>
</reference>
<evidence type="ECO:0000250" key="1">
    <source>
        <dbReference type="UniProtKB" id="Q568P9"/>
    </source>
</evidence>
<evidence type="ECO:0000250" key="2">
    <source>
        <dbReference type="UniProtKB" id="Q8CAE2"/>
    </source>
</evidence>
<evidence type="ECO:0000250" key="3">
    <source>
        <dbReference type="UniProtKB" id="Q9C5Q8"/>
    </source>
</evidence>
<evidence type="ECO:0000256" key="4">
    <source>
        <dbReference type="SAM" id="MobiDB-lite"/>
    </source>
</evidence>
<evidence type="ECO:0000269" key="5">
    <source>
    </source>
</evidence>
<evidence type="ECO:0000269" key="6">
    <source ref="5"/>
</evidence>
<evidence type="ECO:0000305" key="7"/>
<evidence type="ECO:0007744" key="8">
    <source>
        <dbReference type="PDB" id="4XCX"/>
    </source>
</evidence>
<evidence type="ECO:0007829" key="9">
    <source>
        <dbReference type="PDB" id="4XCX"/>
    </source>
</evidence>
<evidence type="ECO:0007829" key="10">
    <source>
        <dbReference type="PDB" id="5WY0"/>
    </source>
</evidence>